<sequence length="346" mass="37863">MVTGNTKAETFYSMKELLKETGGYAIIDGGLATELERHGADLNDPLWSAKCLLTSPHLIHTVHLDYLEAGADIISSASYQATIQGFEAKGYSIEKSESLLRKSVEIACEARSTYYDKCKDDDDKKILKKRPILVAASVGSYGAFLADGSEYSGIYGDLITLETLKDFHRRRVQVLAESGADIIAFETIPNKLEAQAFAELLDEGVAKIPGWFSFNSKDGVNVVSGDSIKECIAIAEACEKVVAVGINCTPPRFIEGLVLEIAKVTSKPILVYPNSGERYDPERKEWVENTGVGNEDFVSYVEKWMDAGVSLLGGCCRTTPTTIRAIHKRLVSRRSLFSSSSSSSHH</sequence>
<comment type="function">
    <text evidence="2 3">Catalyzes the methylation of DL- and L-selenocysteine with S-methylmethionine as donor. Also methylates DL-homocysteine, DL- and L-cysteine in vitro. May be involved in selenium detoxification.</text>
</comment>
<comment type="catalytic activity">
    <reaction evidence="2 3">
        <text>S-methyl-L-methionine + L-selenocysteine = Se-methyl-L-selenocysteine + L-methionine + H(+)</text>
        <dbReference type="Rhea" id="RHEA:26341"/>
        <dbReference type="ChEBI" id="CHEBI:15378"/>
        <dbReference type="ChEBI" id="CHEBI:57843"/>
        <dbReference type="ChEBI" id="CHEBI:57844"/>
        <dbReference type="ChEBI" id="CHEBI:58252"/>
        <dbReference type="ChEBI" id="CHEBI:58531"/>
        <dbReference type="EC" id="2.1.1.280"/>
    </reaction>
</comment>
<comment type="cofactor">
    <cofactor evidence="1">
        <name>Zn(2+)</name>
        <dbReference type="ChEBI" id="CHEBI:29105"/>
    </cofactor>
</comment>
<comment type="activity regulation">
    <text evidence="2">Inhibited by L-methionine.</text>
</comment>
<comment type="biophysicochemical properties">
    <phDependence>
        <text evidence="2">Optimum pH is 7.0.</text>
    </phDependence>
</comment>
<comment type="tissue specificity">
    <text evidence="2">Expressed in roots, young leaves and florets, but not detected in plants not exposed to selenium.</text>
</comment>
<comment type="induction">
    <text evidence="2">Up-regulated by selenate, but not by selenite. Down-regulated by sulfate.</text>
</comment>
<keyword id="KW-0479">Metal-binding</keyword>
<keyword id="KW-0489">Methyltransferase</keyword>
<keyword id="KW-0808">Transferase</keyword>
<keyword id="KW-0862">Zinc</keyword>
<reference key="1">
    <citation type="journal article" date="2005" name="Plant Physiol.">
        <title>Molecular and biochemical characterization of the selenocysteine Se-methyltransferase gene and Se-methylselenocysteine synthesis in broccoli.</title>
        <authorList>
            <person name="Lyi S.M."/>
            <person name="Heller L.I."/>
            <person name="Rutzke M."/>
            <person name="Welch R.M."/>
            <person name="Kochian L.V."/>
            <person name="Li L."/>
        </authorList>
    </citation>
    <scope>NUCLEOTIDE SEQUENCE [MRNA]</scope>
    <scope>FUNCTION</scope>
    <scope>CATALYTIC ACTIVITY</scope>
    <scope>BIOPHYSICOCHEMICAL PROPERTIES</scope>
    <scope>INDUCTION BY SELENATE AND SULFATE</scope>
    <scope>ACTIVITY REGULATION</scope>
    <scope>TISSUE SPECIFICITY</scope>
    <source>
        <strain>cv. Green comet</strain>
    </source>
</reference>
<reference key="2">
    <citation type="journal article" date="2007" name="Phytochemistry">
        <title>Biochemical and molecular characterization of the homocysteine S-methyltransferase from broccoli (Brassica oleracea var. italica).</title>
        <authorList>
            <person name="Lyi S.M."/>
            <person name="Zhou X."/>
            <person name="Kochian L.V."/>
            <person name="Li L."/>
        </authorList>
    </citation>
    <scope>FUNCTION</scope>
    <scope>CATALYTIC ACTIVITY</scope>
    <source>
        <strain>cv. Green comet</strain>
    </source>
</reference>
<name>SMTA_BRAOT</name>
<proteinExistence type="evidence at protein level"/>
<protein>
    <recommendedName>
        <fullName>Selenocysteine Se-methyltransferase</fullName>
        <shortName>BoSMT</shortName>
        <ecNumber>2.1.1.280</ecNumber>
    </recommendedName>
</protein>
<gene>
    <name type="primary">SMT</name>
</gene>
<accession>Q4VNK0</accession>
<dbReference type="EC" id="2.1.1.280"/>
<dbReference type="EMBL" id="AY817737">
    <property type="protein sequence ID" value="AAX20123.1"/>
    <property type="molecule type" value="mRNA"/>
</dbReference>
<dbReference type="SMR" id="Q4VNK0"/>
<dbReference type="KEGG" id="ag:AAX20123"/>
<dbReference type="BioCyc" id="MetaCyc:MONOMER-15249"/>
<dbReference type="BRENDA" id="2.1.1.280">
    <property type="organism ID" value="947"/>
</dbReference>
<dbReference type="GO" id="GO:0046872">
    <property type="term" value="F:metal ion binding"/>
    <property type="evidence" value="ECO:0007669"/>
    <property type="project" value="UniProtKB-KW"/>
</dbReference>
<dbReference type="GO" id="GO:0008898">
    <property type="term" value="F:S-adenosylmethionine-homocysteine S-methyltransferase activity"/>
    <property type="evidence" value="ECO:0007669"/>
    <property type="project" value="TreeGrafter"/>
</dbReference>
<dbReference type="GO" id="GO:0016205">
    <property type="term" value="F:selenocysteine methyltransferase activity"/>
    <property type="evidence" value="ECO:0000314"/>
    <property type="project" value="UniProtKB"/>
</dbReference>
<dbReference type="GO" id="GO:0009086">
    <property type="term" value="P:methionine biosynthetic process"/>
    <property type="evidence" value="ECO:0007669"/>
    <property type="project" value="TreeGrafter"/>
</dbReference>
<dbReference type="GO" id="GO:0032259">
    <property type="term" value="P:methylation"/>
    <property type="evidence" value="ECO:0000314"/>
    <property type="project" value="UniProtKB"/>
</dbReference>
<dbReference type="GO" id="GO:0010269">
    <property type="term" value="P:response to selenium ion"/>
    <property type="evidence" value="ECO:0000314"/>
    <property type="project" value="UniProtKB"/>
</dbReference>
<dbReference type="GO" id="GO:0033528">
    <property type="term" value="P:S-methylmethionine cycle"/>
    <property type="evidence" value="ECO:0007669"/>
    <property type="project" value="TreeGrafter"/>
</dbReference>
<dbReference type="FunFam" id="3.20.20.330:FF:000002">
    <property type="entry name" value="Homocysteine S-methyltransferase"/>
    <property type="match status" value="1"/>
</dbReference>
<dbReference type="Gene3D" id="3.20.20.330">
    <property type="entry name" value="Homocysteine-binding-like domain"/>
    <property type="match status" value="1"/>
</dbReference>
<dbReference type="InterPro" id="IPR003726">
    <property type="entry name" value="HCY_dom"/>
</dbReference>
<dbReference type="InterPro" id="IPR036589">
    <property type="entry name" value="HCY_dom_sf"/>
</dbReference>
<dbReference type="InterPro" id="IPR051486">
    <property type="entry name" value="Hcy_S-methyltransferase"/>
</dbReference>
<dbReference type="NCBIfam" id="NF007020">
    <property type="entry name" value="PRK09485.1"/>
    <property type="match status" value="1"/>
</dbReference>
<dbReference type="PANTHER" id="PTHR46015:SF1">
    <property type="entry name" value="HOMOCYSTEINE S-METHYLTRANSFERASE-LIKE ISOFORM 1"/>
    <property type="match status" value="1"/>
</dbReference>
<dbReference type="PANTHER" id="PTHR46015">
    <property type="entry name" value="ZGC:172121"/>
    <property type="match status" value="1"/>
</dbReference>
<dbReference type="Pfam" id="PF02574">
    <property type="entry name" value="S-methyl_trans"/>
    <property type="match status" value="1"/>
</dbReference>
<dbReference type="SUPFAM" id="SSF82282">
    <property type="entry name" value="Homocysteine S-methyltransferase"/>
    <property type="match status" value="1"/>
</dbReference>
<dbReference type="PROSITE" id="PS50970">
    <property type="entry name" value="HCY"/>
    <property type="match status" value="1"/>
</dbReference>
<organism>
    <name type="scientific">Brassica oleracea var. italica</name>
    <name type="common">Broccoli</name>
    <dbReference type="NCBI Taxonomy" id="36774"/>
    <lineage>
        <taxon>Eukaryota</taxon>
        <taxon>Viridiplantae</taxon>
        <taxon>Streptophyta</taxon>
        <taxon>Embryophyta</taxon>
        <taxon>Tracheophyta</taxon>
        <taxon>Spermatophyta</taxon>
        <taxon>Magnoliopsida</taxon>
        <taxon>eudicotyledons</taxon>
        <taxon>Gunneridae</taxon>
        <taxon>Pentapetalae</taxon>
        <taxon>rosids</taxon>
        <taxon>malvids</taxon>
        <taxon>Brassicales</taxon>
        <taxon>Brassicaceae</taxon>
        <taxon>Brassiceae</taxon>
        <taxon>Brassica</taxon>
    </lineage>
</organism>
<feature type="chain" id="PRO_0000409375" description="Selenocysteine Se-methyltransferase">
    <location>
        <begin position="1"/>
        <end position="346"/>
    </location>
</feature>
<feature type="domain" description="Hcy-binding" evidence="1">
    <location>
        <begin position="13"/>
        <end position="330"/>
    </location>
</feature>
<feature type="binding site" evidence="1">
    <location>
        <position position="248"/>
    </location>
    <ligand>
        <name>Zn(2+)</name>
        <dbReference type="ChEBI" id="CHEBI:29105"/>
    </ligand>
</feature>
<feature type="binding site" evidence="1">
    <location>
        <position position="315"/>
    </location>
    <ligand>
        <name>Zn(2+)</name>
        <dbReference type="ChEBI" id="CHEBI:29105"/>
    </ligand>
</feature>
<feature type="binding site" evidence="1">
    <location>
        <position position="316"/>
    </location>
    <ligand>
        <name>Zn(2+)</name>
        <dbReference type="ChEBI" id="CHEBI:29105"/>
    </ligand>
</feature>
<evidence type="ECO:0000255" key="1">
    <source>
        <dbReference type="PROSITE-ProRule" id="PRU00333"/>
    </source>
</evidence>
<evidence type="ECO:0000269" key="2">
    <source>
    </source>
</evidence>
<evidence type="ECO:0000269" key="3">
    <source>
    </source>
</evidence>